<sequence length="450" mass="51517">MSLLQFSGLFVVWLLCTLFIATLTWFEFRRVRFNFNVFFSLLFLLTFFFGFPLTSVLVFRFDVGVAPPEILLQALLSAGCFYAVYYVTYKTRLRKRVADVPRRPLFTMNRVETNLTWVILMGIALVSVGIFFMHNGFLLFRLNSYSQIFSSEVSGVALKRFFYFFIPAMLVVYFLRQDSKAWLFFLVSTVAFGLLTYMIVGGTRANIIIAFAIFLFIGIIRGWISLWMLAAAGVLGIVGMFWLALKRYGMNVSGDEAFYTFLYLTRDTFSPWENLALLLQNYDNIDFQGLAPIVRDFYVFIPSWLWPGRPSMVLNSANYFTWEVLNNHSGLAISPTLIGSLVVMGGALFIPLGAIVVGLIIKWFDWLYELGNREPNRYKAAILHSFCFGAIFNMIVLAREGLDSFVSRVVFFIVVFGACLMIAKLLYWLFESAGLIHKRTKSSLRTQVEG</sequence>
<keyword id="KW-0997">Cell inner membrane</keyword>
<keyword id="KW-1003">Cell membrane</keyword>
<keyword id="KW-0472">Membrane</keyword>
<keyword id="KW-0812">Transmembrane</keyword>
<keyword id="KW-1133">Transmembrane helix</keyword>
<evidence type="ECO:0000255" key="1">
    <source>
        <dbReference type="HAMAP-Rule" id="MF_01003"/>
    </source>
</evidence>
<feature type="chain" id="PRO_1000200203" description="Probable ECA polymerase">
    <location>
        <begin position="1"/>
        <end position="450"/>
    </location>
</feature>
<feature type="transmembrane region" description="Helical" evidence="1">
    <location>
        <begin position="6"/>
        <end position="26"/>
    </location>
</feature>
<feature type="transmembrane region" description="Helical" evidence="1">
    <location>
        <begin position="37"/>
        <end position="57"/>
    </location>
</feature>
<feature type="transmembrane region" description="Helical" evidence="1">
    <location>
        <begin position="63"/>
        <end position="83"/>
    </location>
</feature>
<feature type="transmembrane region" description="Helical" evidence="1">
    <location>
        <begin position="118"/>
        <end position="138"/>
    </location>
</feature>
<feature type="transmembrane region" description="Helical" evidence="1">
    <location>
        <begin position="155"/>
        <end position="175"/>
    </location>
</feature>
<feature type="transmembrane region" description="Helical" evidence="1">
    <location>
        <begin position="181"/>
        <end position="201"/>
    </location>
</feature>
<feature type="transmembrane region" description="Helical" evidence="1">
    <location>
        <begin position="207"/>
        <end position="227"/>
    </location>
</feature>
<feature type="transmembrane region" description="Helical" evidence="1">
    <location>
        <begin position="228"/>
        <end position="248"/>
    </location>
</feature>
<feature type="transmembrane region" description="Helical" evidence="1">
    <location>
        <begin position="341"/>
        <end position="361"/>
    </location>
</feature>
<feature type="transmembrane region" description="Helical" evidence="1">
    <location>
        <begin position="378"/>
        <end position="398"/>
    </location>
</feature>
<feature type="transmembrane region" description="Helical" evidence="1">
    <location>
        <begin position="410"/>
        <end position="430"/>
    </location>
</feature>
<gene>
    <name evidence="1" type="primary">wzyE</name>
    <name type="ordered locus">ECDH10B_3983</name>
</gene>
<protein>
    <recommendedName>
        <fullName evidence="1">Probable ECA polymerase</fullName>
    </recommendedName>
</protein>
<proteinExistence type="inferred from homology"/>
<dbReference type="EMBL" id="CP000948">
    <property type="protein sequence ID" value="ACB04823.1"/>
    <property type="molecule type" value="Genomic_DNA"/>
</dbReference>
<dbReference type="RefSeq" id="WP_000055129.1">
    <property type="nucleotide sequence ID" value="NC_010473.1"/>
</dbReference>
<dbReference type="KEGG" id="ecd:ECDH10B_3983"/>
<dbReference type="HOGENOM" id="CLU_049711_0_0_6"/>
<dbReference type="UniPathway" id="UPA00566"/>
<dbReference type="GO" id="GO:0005886">
    <property type="term" value="C:plasma membrane"/>
    <property type="evidence" value="ECO:0007669"/>
    <property type="project" value="UniProtKB-SubCell"/>
</dbReference>
<dbReference type="GO" id="GO:0009246">
    <property type="term" value="P:enterobacterial common antigen biosynthetic process"/>
    <property type="evidence" value="ECO:0007669"/>
    <property type="project" value="UniProtKB-UniRule"/>
</dbReference>
<dbReference type="HAMAP" id="MF_01003">
    <property type="entry name" value="WzyE"/>
    <property type="match status" value="1"/>
</dbReference>
<dbReference type="InterPro" id="IPR010691">
    <property type="entry name" value="WzyE"/>
</dbReference>
<dbReference type="NCBIfam" id="NF002820">
    <property type="entry name" value="PRK02975.1"/>
    <property type="match status" value="1"/>
</dbReference>
<dbReference type="Pfam" id="PF06899">
    <property type="entry name" value="WzyE"/>
    <property type="match status" value="1"/>
</dbReference>
<name>WZYE_ECODH</name>
<accession>B1XAG5</accession>
<organism>
    <name type="scientific">Escherichia coli (strain K12 / DH10B)</name>
    <dbReference type="NCBI Taxonomy" id="316385"/>
    <lineage>
        <taxon>Bacteria</taxon>
        <taxon>Pseudomonadati</taxon>
        <taxon>Pseudomonadota</taxon>
        <taxon>Gammaproteobacteria</taxon>
        <taxon>Enterobacterales</taxon>
        <taxon>Enterobacteriaceae</taxon>
        <taxon>Escherichia</taxon>
    </lineage>
</organism>
<reference key="1">
    <citation type="journal article" date="2008" name="J. Bacteriol.">
        <title>The complete genome sequence of Escherichia coli DH10B: insights into the biology of a laboratory workhorse.</title>
        <authorList>
            <person name="Durfee T."/>
            <person name="Nelson R."/>
            <person name="Baldwin S."/>
            <person name="Plunkett G. III"/>
            <person name="Burland V."/>
            <person name="Mau B."/>
            <person name="Petrosino J.F."/>
            <person name="Qin X."/>
            <person name="Muzny D.M."/>
            <person name="Ayele M."/>
            <person name="Gibbs R.A."/>
            <person name="Csorgo B."/>
            <person name="Posfai G."/>
            <person name="Weinstock G.M."/>
            <person name="Blattner F.R."/>
        </authorList>
    </citation>
    <scope>NUCLEOTIDE SEQUENCE [LARGE SCALE GENOMIC DNA]</scope>
    <source>
        <strain>K12 / DH10B</strain>
    </source>
</reference>
<comment type="function">
    <text evidence="1">Probably involved in the polymerization of enterobacterial common antigen (ECA) trisaccharide repeat units.</text>
</comment>
<comment type="pathway">
    <text evidence="1">Bacterial outer membrane biogenesis; enterobacterial common antigen biosynthesis.</text>
</comment>
<comment type="subunit">
    <text evidence="1">Probably part of a complex composed of WzxE, WzyE and WzzE.</text>
</comment>
<comment type="subcellular location">
    <subcellularLocation>
        <location evidence="1">Cell inner membrane</location>
        <topology evidence="1">Multi-pass membrane protein</topology>
    </subcellularLocation>
</comment>
<comment type="similarity">
    <text evidence="1">Belongs to the WzyE family.</text>
</comment>